<feature type="initiator methionine" description="Removed" evidence="11 13 14">
    <location>
        <position position="1"/>
    </location>
</feature>
<feature type="chain" id="PRO_0000083538" description="Tubulin-specific chaperone E">
    <location>
        <begin position="2"/>
        <end position="527"/>
    </location>
</feature>
<feature type="domain" description="CAP-Gly" evidence="3">
    <location>
        <begin position="27"/>
        <end position="71"/>
    </location>
</feature>
<feature type="repeat" description="LRR 1">
    <location>
        <begin position="154"/>
        <end position="175"/>
    </location>
</feature>
<feature type="repeat" description="LRR 2">
    <location>
        <begin position="180"/>
        <end position="200"/>
    </location>
</feature>
<feature type="repeat" description="LRR 3">
    <location>
        <begin position="205"/>
        <end position="226"/>
    </location>
</feature>
<feature type="repeat" description="LRR 4">
    <location>
        <begin position="230"/>
        <end position="252"/>
    </location>
</feature>
<feature type="repeat" description="LRR 5">
    <location>
        <begin position="253"/>
        <end position="274"/>
    </location>
</feature>
<feature type="repeat" description="LRR 6">
    <location>
        <begin position="278"/>
        <end position="299"/>
    </location>
</feature>
<feature type="repeat" description="LRR 7">
    <location>
        <begin position="308"/>
        <end position="329"/>
    </location>
</feature>
<feature type="domain" description="LRRCT">
    <location>
        <begin position="342"/>
        <end position="384"/>
    </location>
</feature>
<feature type="modified residue" description="N-acetylserine" evidence="11 13 14">
    <location>
        <position position="2"/>
    </location>
</feature>
<feature type="modified residue" description="N6-acetyllysine" evidence="12">
    <location>
        <position position="463"/>
    </location>
</feature>
<feature type="modified residue" description="Phosphoserine" evidence="10 15">
    <location>
        <position position="495"/>
    </location>
</feature>
<feature type="splice variant" id="VSP_053870" description="In isoform 2." evidence="8">
    <original>E</original>
    <variation>EAHAQCGGSRHGLDMQKDASKFVDLCVLQKCSTSNCIISAKDHTSMRMNVAK</variation>
    <location>
        <position position="220"/>
    </location>
</feature>
<feature type="sequence variant" id="VAR_032920" description="In HRDS and KCS1." evidence="5">
    <location>
        <begin position="52"/>
        <end position="55"/>
    </location>
</feature>
<feature type="sequence variant" id="VAR_077878" description="In PEAMO; decreased function in the organization of microtubule cytoskeleton and mitotic splindle; dbSNP:rs780472451." evidence="6">
    <original>I</original>
    <variation>N</variation>
    <location>
        <position position="155"/>
    </location>
</feature>
<feature type="sequence variant" id="VAR_032921" description="In dbSNP:rs16832611.">
    <original>V</original>
    <variation>A</variation>
    <location>
        <position position="205"/>
    </location>
</feature>
<feature type="sequence variant" id="VAR_032922" description="In dbSNP:rs35579976.">
    <original>S</original>
    <variation>T</variation>
    <location>
        <position position="333"/>
    </location>
</feature>
<feature type="sequence variant" id="VAR_032923" description="In dbSNP:rs16832619.">
    <original>E</original>
    <variation>G</variation>
    <location>
        <position position="409"/>
    </location>
</feature>
<feature type="sequence conflict" description="In Ref. 3; BAF84976." evidence="9" ref="3">
    <original>I</original>
    <variation>V</variation>
    <location>
        <position position="450"/>
    </location>
</feature>
<feature type="strand" evidence="17">
    <location>
        <begin position="445"/>
        <end position="451"/>
    </location>
</feature>
<feature type="turn" evidence="16">
    <location>
        <begin position="453"/>
        <end position="455"/>
    </location>
</feature>
<feature type="helix" evidence="17">
    <location>
        <begin position="457"/>
        <end position="459"/>
    </location>
</feature>
<feature type="strand" evidence="17">
    <location>
        <begin position="461"/>
        <end position="466"/>
    </location>
</feature>
<feature type="helix" evidence="17">
    <location>
        <begin position="471"/>
        <end position="482"/>
    </location>
</feature>
<feature type="helix" evidence="17">
    <location>
        <begin position="486"/>
        <end position="488"/>
    </location>
</feature>
<feature type="strand" evidence="17">
    <location>
        <begin position="490"/>
        <end position="494"/>
    </location>
</feature>
<feature type="helix" evidence="17">
    <location>
        <begin position="513"/>
        <end position="515"/>
    </location>
</feature>
<feature type="strand" evidence="17">
    <location>
        <begin position="522"/>
        <end position="526"/>
    </location>
</feature>
<accession>Q15813</accession>
<accession>A8K8C2</accession>
<accession>B7Z3P1</accession>
<sequence>MSDTLTADVIGRRVEVNGEHATVRFAGVVPPVAGPWLGVEWDNPERGKHDGSHEGTVYFKCRHPTGGSFIRPNKVNFGTDFLTAIKNRYVLEDGPEEDRKEQIVTIGNKPVETIGFDSIMKQQSQLSKLQEVSLRNCAVSCAGEKGGVAEACPNIRKVDLSKNLLSSWDEVIHIADQLRHLEVLNVSENKLKFPSGSVLTGTLSVLKVLVLNQTGITWAEVLRCVAGCPGLEELYLESNNIFISERPTDVLQTVKLLDLSSNQLIDENQLYLIAHLPRLEQLILSDTGISSLHFPDAGIGCKTSMFPSLKYLVVNDNQISQWSFFNELEKLPSLRALSCLRNPLTKEDKEAETARLLIIASIGQLKTLNKCEILPEERRRAELDYRKAFGNEWKQAGGHKDPEKNRLSEEFLTAHPRYQFLCLKYGAPEDWELKTQQPLMLKNQLLTLKIKYPHQLDQKVLEKQLPGSMTIQKVKGLLSRLLKVPVSDLLLSYESPKKPGREIELENDLKSLQFYSVENGDCLLVRW</sequence>
<comment type="function">
    <text evidence="4 6">Tubulin-folding protein; involved in the second step of the tubulin folding pathway and in the regulation of tubulin heterodimer dissociation. Required for correct organization of microtubule cytoskeleton and mitotic splindle, and maintenance of the neuronal microtubule network.</text>
</comment>
<comment type="subunit">
    <text evidence="2 7">Supercomplex made of cofactors A to E. Cofactors A and D function by capturing and stabilizing tubulin in a quasi-native conformation. Cofactor E binds to the cofactor D-tubulin complex; interaction with cofactor C then causes the release of tubulin polypeptides that are committed to the native state. Cofactors B and E can form a heterodimer which binds to alpha-tubulin and enhances their ability to dissociate tubulin heterodimers (By similarity). Interacts with TBCD (PubMed:27666374).</text>
</comment>
<comment type="subcellular location">
    <subcellularLocation>
        <location evidence="1">Cytoplasm</location>
    </subcellularLocation>
    <subcellularLocation>
        <location evidence="1">Cytoplasm</location>
        <location evidence="1">Cytoskeleton</location>
    </subcellularLocation>
</comment>
<comment type="alternative products">
    <event type="alternative splicing"/>
    <isoform>
        <id>Q15813-1</id>
        <name>1</name>
        <sequence type="displayed"/>
    </isoform>
    <isoform>
        <id>Q15813-2</id>
        <name>2</name>
        <sequence type="described" ref="VSP_053870"/>
    </isoform>
</comment>
<comment type="disease" evidence="5">
    <disease id="DI-01793">
        <name>Hypoparathyroidism-retardation-dysmorphism syndrome</name>
        <acronym>HRDS</acronym>
        <description>An autosomal recessive multisystem disorder characterized by hypoparathyroidism, intrauterine and postnatal growth retardation, psychomotor retardation, epilepsy, microcephaly, and facial dysmorphism.</description>
        <dbReference type="MIM" id="241410"/>
    </disease>
    <text>The disease is caused by variants affecting the gene represented in this entry.</text>
</comment>
<comment type="disease" evidence="5">
    <disease id="DI-01859">
        <name>Kenny-Caffey syndrome 1</name>
        <acronym>KCS1</acronym>
        <description>An autosomal recessive form of Kenny-Caffey syndrome, a disorder characterized by impaired skeletal development with small and dense bones, short stature, and primary hypoparathyroidism with hypocalcemia. Clinical features include cortical thickening and medullary stenosis of the tubular bones, delayed closure of fontanels, defective dentition, small eyes with hypermetropia, and frontal bossing with a triangular face.</description>
        <dbReference type="MIM" id="244460"/>
    </disease>
    <text>The disease is caused by variants affecting the gene represented in this entry.</text>
</comment>
<comment type="disease" evidence="6">
    <disease id="DI-04873">
        <name>Encephalopathy, progressive, with amyotrophy and optic atrophy</name>
        <acronym>PEAMO</acronym>
        <description>An autosomal recessive, progressive, neurodegenerative encephalopathy with onset in infancy. Affected individuals manifest delayed psychomotor development, severe hypotonia, motor regression, spinal muscular atrophy, distal amyotrophy and weakness of all limbs, and intellectual disability of variable severity. Additional features include optic atrophy, thin corpus callosum, and cerebellar atrophy.</description>
        <dbReference type="MIM" id="617207"/>
    </disease>
    <text>The disease is caused by variants affecting the gene represented in this entry.</text>
</comment>
<comment type="similarity">
    <text evidence="9">Belongs to the TBCE family.</text>
</comment>
<reference key="1">
    <citation type="journal article" date="1996" name="Cell">
        <title>Pathway leading to correctly folded beta-tubulin.</title>
        <authorList>
            <person name="Tian G."/>
            <person name="Huang Y."/>
            <person name="Rommelaere H."/>
            <person name="Vandekerckhove J."/>
            <person name="Ampe C."/>
            <person name="Cowan N.J."/>
        </authorList>
    </citation>
    <scope>NUCLEOTIDE SEQUENCE [MRNA] (ISOFORM 1)</scope>
</reference>
<reference key="2">
    <citation type="submission" date="2003-05" db="EMBL/GenBank/DDBJ databases">
        <title>Cloning of human full-length CDSs in BD Creator(TM) system donor vector.</title>
        <authorList>
            <person name="Kalnine N."/>
            <person name="Chen X."/>
            <person name="Rolfs A."/>
            <person name="Halleck A."/>
            <person name="Hines L."/>
            <person name="Eisenstein S."/>
            <person name="Koundinya M."/>
            <person name="Raphael J."/>
            <person name="Moreira D."/>
            <person name="Kelley T."/>
            <person name="LaBaer J."/>
            <person name="Lin Y."/>
            <person name="Phelan M."/>
            <person name="Farmer A."/>
        </authorList>
    </citation>
    <scope>NUCLEOTIDE SEQUENCE [LARGE SCALE MRNA] (ISOFORM 1)</scope>
</reference>
<reference key="3">
    <citation type="journal article" date="2004" name="Nat. Genet.">
        <title>Complete sequencing and characterization of 21,243 full-length human cDNAs.</title>
        <authorList>
            <person name="Ota T."/>
            <person name="Suzuki Y."/>
            <person name="Nishikawa T."/>
            <person name="Otsuki T."/>
            <person name="Sugiyama T."/>
            <person name="Irie R."/>
            <person name="Wakamatsu A."/>
            <person name="Hayashi K."/>
            <person name="Sato H."/>
            <person name="Nagai K."/>
            <person name="Kimura K."/>
            <person name="Makita H."/>
            <person name="Sekine M."/>
            <person name="Obayashi M."/>
            <person name="Nishi T."/>
            <person name="Shibahara T."/>
            <person name="Tanaka T."/>
            <person name="Ishii S."/>
            <person name="Yamamoto J."/>
            <person name="Saito K."/>
            <person name="Kawai Y."/>
            <person name="Isono Y."/>
            <person name="Nakamura Y."/>
            <person name="Nagahari K."/>
            <person name="Murakami K."/>
            <person name="Yasuda T."/>
            <person name="Iwayanagi T."/>
            <person name="Wagatsuma M."/>
            <person name="Shiratori A."/>
            <person name="Sudo H."/>
            <person name="Hosoiri T."/>
            <person name="Kaku Y."/>
            <person name="Kodaira H."/>
            <person name="Kondo H."/>
            <person name="Sugawara M."/>
            <person name="Takahashi M."/>
            <person name="Kanda K."/>
            <person name="Yokoi T."/>
            <person name="Furuya T."/>
            <person name="Kikkawa E."/>
            <person name="Omura Y."/>
            <person name="Abe K."/>
            <person name="Kamihara K."/>
            <person name="Katsuta N."/>
            <person name="Sato K."/>
            <person name="Tanikawa M."/>
            <person name="Yamazaki M."/>
            <person name="Ninomiya K."/>
            <person name="Ishibashi T."/>
            <person name="Yamashita H."/>
            <person name="Murakawa K."/>
            <person name="Fujimori K."/>
            <person name="Tanai H."/>
            <person name="Kimata M."/>
            <person name="Watanabe M."/>
            <person name="Hiraoka S."/>
            <person name="Chiba Y."/>
            <person name="Ishida S."/>
            <person name="Ono Y."/>
            <person name="Takiguchi S."/>
            <person name="Watanabe S."/>
            <person name="Yosida M."/>
            <person name="Hotuta T."/>
            <person name="Kusano J."/>
            <person name="Kanehori K."/>
            <person name="Takahashi-Fujii A."/>
            <person name="Hara H."/>
            <person name="Tanase T.-O."/>
            <person name="Nomura Y."/>
            <person name="Togiya S."/>
            <person name="Komai F."/>
            <person name="Hara R."/>
            <person name="Takeuchi K."/>
            <person name="Arita M."/>
            <person name="Imose N."/>
            <person name="Musashino K."/>
            <person name="Yuuki H."/>
            <person name="Oshima A."/>
            <person name="Sasaki N."/>
            <person name="Aotsuka S."/>
            <person name="Yoshikawa Y."/>
            <person name="Matsunawa H."/>
            <person name="Ichihara T."/>
            <person name="Shiohata N."/>
            <person name="Sano S."/>
            <person name="Moriya S."/>
            <person name="Momiyama H."/>
            <person name="Satoh N."/>
            <person name="Takami S."/>
            <person name="Terashima Y."/>
            <person name="Suzuki O."/>
            <person name="Nakagawa S."/>
            <person name="Senoh A."/>
            <person name="Mizoguchi H."/>
            <person name="Goto Y."/>
            <person name="Shimizu F."/>
            <person name="Wakebe H."/>
            <person name="Hishigaki H."/>
            <person name="Watanabe T."/>
            <person name="Sugiyama A."/>
            <person name="Takemoto M."/>
            <person name="Kawakami B."/>
            <person name="Yamazaki M."/>
            <person name="Watanabe K."/>
            <person name="Kumagai A."/>
            <person name="Itakura S."/>
            <person name="Fukuzumi Y."/>
            <person name="Fujimori Y."/>
            <person name="Komiyama M."/>
            <person name="Tashiro H."/>
            <person name="Tanigami A."/>
            <person name="Fujiwara T."/>
            <person name="Ono T."/>
            <person name="Yamada K."/>
            <person name="Fujii Y."/>
            <person name="Ozaki K."/>
            <person name="Hirao M."/>
            <person name="Ohmori Y."/>
            <person name="Kawabata A."/>
            <person name="Hikiji T."/>
            <person name="Kobatake N."/>
            <person name="Inagaki H."/>
            <person name="Ikema Y."/>
            <person name="Okamoto S."/>
            <person name="Okitani R."/>
            <person name="Kawakami T."/>
            <person name="Noguchi S."/>
            <person name="Itoh T."/>
            <person name="Shigeta K."/>
            <person name="Senba T."/>
            <person name="Matsumura K."/>
            <person name="Nakajima Y."/>
            <person name="Mizuno T."/>
            <person name="Morinaga M."/>
            <person name="Sasaki M."/>
            <person name="Togashi T."/>
            <person name="Oyama M."/>
            <person name="Hata H."/>
            <person name="Watanabe M."/>
            <person name="Komatsu T."/>
            <person name="Mizushima-Sugano J."/>
            <person name="Satoh T."/>
            <person name="Shirai Y."/>
            <person name="Takahashi Y."/>
            <person name="Nakagawa K."/>
            <person name="Okumura K."/>
            <person name="Nagase T."/>
            <person name="Nomura N."/>
            <person name="Kikuchi H."/>
            <person name="Masuho Y."/>
            <person name="Yamashita R."/>
            <person name="Nakai K."/>
            <person name="Yada T."/>
            <person name="Nakamura Y."/>
            <person name="Ohara O."/>
            <person name="Isogai T."/>
            <person name="Sugano S."/>
        </authorList>
    </citation>
    <scope>NUCLEOTIDE SEQUENCE [LARGE SCALE MRNA] (ISOFORMS 1 AND 2)</scope>
    <source>
        <tissue>Testis</tissue>
        <tissue>Thalamus</tissue>
    </source>
</reference>
<reference key="4">
    <citation type="journal article" date="2006" name="Nature">
        <title>The DNA sequence and biological annotation of human chromosome 1.</title>
        <authorList>
            <person name="Gregory S.G."/>
            <person name="Barlow K.F."/>
            <person name="McLay K.E."/>
            <person name="Kaul R."/>
            <person name="Swarbreck D."/>
            <person name="Dunham A."/>
            <person name="Scott C.E."/>
            <person name="Howe K.L."/>
            <person name="Woodfine K."/>
            <person name="Spencer C.C.A."/>
            <person name="Jones M.C."/>
            <person name="Gillson C."/>
            <person name="Searle S."/>
            <person name="Zhou Y."/>
            <person name="Kokocinski F."/>
            <person name="McDonald L."/>
            <person name="Evans R."/>
            <person name="Phillips K."/>
            <person name="Atkinson A."/>
            <person name="Cooper R."/>
            <person name="Jones C."/>
            <person name="Hall R.E."/>
            <person name="Andrews T.D."/>
            <person name="Lloyd C."/>
            <person name="Ainscough R."/>
            <person name="Almeida J.P."/>
            <person name="Ambrose K.D."/>
            <person name="Anderson F."/>
            <person name="Andrew R.W."/>
            <person name="Ashwell R.I.S."/>
            <person name="Aubin K."/>
            <person name="Babbage A.K."/>
            <person name="Bagguley C.L."/>
            <person name="Bailey J."/>
            <person name="Beasley H."/>
            <person name="Bethel G."/>
            <person name="Bird C.P."/>
            <person name="Bray-Allen S."/>
            <person name="Brown J.Y."/>
            <person name="Brown A.J."/>
            <person name="Buckley D."/>
            <person name="Burton J."/>
            <person name="Bye J."/>
            <person name="Carder C."/>
            <person name="Chapman J.C."/>
            <person name="Clark S.Y."/>
            <person name="Clarke G."/>
            <person name="Clee C."/>
            <person name="Cobley V."/>
            <person name="Collier R.E."/>
            <person name="Corby N."/>
            <person name="Coville G.J."/>
            <person name="Davies J."/>
            <person name="Deadman R."/>
            <person name="Dunn M."/>
            <person name="Earthrowl M."/>
            <person name="Ellington A.G."/>
            <person name="Errington H."/>
            <person name="Frankish A."/>
            <person name="Frankland J."/>
            <person name="French L."/>
            <person name="Garner P."/>
            <person name="Garnett J."/>
            <person name="Gay L."/>
            <person name="Ghori M.R.J."/>
            <person name="Gibson R."/>
            <person name="Gilby L.M."/>
            <person name="Gillett W."/>
            <person name="Glithero R.J."/>
            <person name="Grafham D.V."/>
            <person name="Griffiths C."/>
            <person name="Griffiths-Jones S."/>
            <person name="Grocock R."/>
            <person name="Hammond S."/>
            <person name="Harrison E.S.I."/>
            <person name="Hart E."/>
            <person name="Haugen E."/>
            <person name="Heath P.D."/>
            <person name="Holmes S."/>
            <person name="Holt K."/>
            <person name="Howden P.J."/>
            <person name="Hunt A.R."/>
            <person name="Hunt S.E."/>
            <person name="Hunter G."/>
            <person name="Isherwood J."/>
            <person name="James R."/>
            <person name="Johnson C."/>
            <person name="Johnson D."/>
            <person name="Joy A."/>
            <person name="Kay M."/>
            <person name="Kershaw J.K."/>
            <person name="Kibukawa M."/>
            <person name="Kimberley A.M."/>
            <person name="King A."/>
            <person name="Knights A.J."/>
            <person name="Lad H."/>
            <person name="Laird G."/>
            <person name="Lawlor S."/>
            <person name="Leongamornlert D.A."/>
            <person name="Lloyd D.M."/>
            <person name="Loveland J."/>
            <person name="Lovell J."/>
            <person name="Lush M.J."/>
            <person name="Lyne R."/>
            <person name="Martin S."/>
            <person name="Mashreghi-Mohammadi M."/>
            <person name="Matthews L."/>
            <person name="Matthews N.S.W."/>
            <person name="McLaren S."/>
            <person name="Milne S."/>
            <person name="Mistry S."/>
            <person name="Moore M.J.F."/>
            <person name="Nickerson T."/>
            <person name="O'Dell C.N."/>
            <person name="Oliver K."/>
            <person name="Palmeiri A."/>
            <person name="Palmer S.A."/>
            <person name="Parker A."/>
            <person name="Patel D."/>
            <person name="Pearce A.V."/>
            <person name="Peck A.I."/>
            <person name="Pelan S."/>
            <person name="Phelps K."/>
            <person name="Phillimore B.J."/>
            <person name="Plumb R."/>
            <person name="Rajan J."/>
            <person name="Raymond C."/>
            <person name="Rouse G."/>
            <person name="Saenphimmachak C."/>
            <person name="Sehra H.K."/>
            <person name="Sheridan E."/>
            <person name="Shownkeen R."/>
            <person name="Sims S."/>
            <person name="Skuce C.D."/>
            <person name="Smith M."/>
            <person name="Steward C."/>
            <person name="Subramanian S."/>
            <person name="Sycamore N."/>
            <person name="Tracey A."/>
            <person name="Tromans A."/>
            <person name="Van Helmond Z."/>
            <person name="Wall M."/>
            <person name="Wallis J.M."/>
            <person name="White S."/>
            <person name="Whitehead S.L."/>
            <person name="Wilkinson J.E."/>
            <person name="Willey D.L."/>
            <person name="Williams H."/>
            <person name="Wilming L."/>
            <person name="Wray P.W."/>
            <person name="Wu Z."/>
            <person name="Coulson A."/>
            <person name="Vaudin M."/>
            <person name="Sulston J.E."/>
            <person name="Durbin R.M."/>
            <person name="Hubbard T."/>
            <person name="Wooster R."/>
            <person name="Dunham I."/>
            <person name="Carter N.P."/>
            <person name="McVean G."/>
            <person name="Ross M.T."/>
            <person name="Harrow J."/>
            <person name="Olson M.V."/>
            <person name="Beck S."/>
            <person name="Rogers J."/>
            <person name="Bentley D.R."/>
        </authorList>
    </citation>
    <scope>NUCLEOTIDE SEQUENCE [LARGE SCALE GENOMIC DNA]</scope>
</reference>
<reference key="5">
    <citation type="journal article" date="2004" name="Genome Res.">
        <title>The status, quality, and expansion of the NIH full-length cDNA project: the Mammalian Gene Collection (MGC).</title>
        <authorList>
            <consortium name="The MGC Project Team"/>
        </authorList>
    </citation>
    <scope>NUCLEOTIDE SEQUENCE [LARGE SCALE MRNA] (ISOFORM 1)</scope>
    <source>
        <tissue>Eye</tissue>
    </source>
</reference>
<reference key="6">
    <citation type="journal article" date="2002" name="J. Biol. Chem.">
        <title>Functional overlap between retinitis pigmentosa 2 protein and the tubulin-specific chaperone cofactor C.</title>
        <authorList>
            <person name="Bartolini F."/>
            <person name="Bhamidipati A."/>
            <person name="Thomas S."/>
            <person name="Schwahn U."/>
            <person name="Lewis S.A."/>
            <person name="Cowan N.J."/>
        </authorList>
    </citation>
    <scope>FUNCTION</scope>
</reference>
<reference key="7">
    <citation type="journal article" date="2008" name="Proc. Natl. Acad. Sci. U.S.A.">
        <title>A quantitative atlas of mitotic phosphorylation.</title>
        <authorList>
            <person name="Dephoure N."/>
            <person name="Zhou C."/>
            <person name="Villen J."/>
            <person name="Beausoleil S.A."/>
            <person name="Bakalarski C.E."/>
            <person name="Elledge S.J."/>
            <person name="Gygi S.P."/>
        </authorList>
    </citation>
    <scope>PHOSPHORYLATION [LARGE SCALE ANALYSIS] AT SER-495</scope>
    <scope>IDENTIFICATION BY MASS SPECTROMETRY [LARGE SCALE ANALYSIS]</scope>
    <source>
        <tissue>Cervix carcinoma</tissue>
    </source>
</reference>
<reference key="8">
    <citation type="journal article" date="2009" name="Anal. Chem.">
        <title>Lys-N and trypsin cover complementary parts of the phosphoproteome in a refined SCX-based approach.</title>
        <authorList>
            <person name="Gauci S."/>
            <person name="Helbig A.O."/>
            <person name="Slijper M."/>
            <person name="Krijgsveld J."/>
            <person name="Heck A.J."/>
            <person name="Mohammed S."/>
        </authorList>
    </citation>
    <scope>ACETYLATION [LARGE SCALE ANALYSIS] AT SER-2</scope>
    <scope>CLEAVAGE OF INITIATOR METHIONINE [LARGE SCALE ANALYSIS]</scope>
    <scope>IDENTIFICATION BY MASS SPECTROMETRY [LARGE SCALE ANALYSIS]</scope>
</reference>
<reference key="9">
    <citation type="journal article" date="2009" name="Science">
        <title>Lysine acetylation targets protein complexes and co-regulates major cellular functions.</title>
        <authorList>
            <person name="Choudhary C."/>
            <person name="Kumar C."/>
            <person name="Gnad F."/>
            <person name="Nielsen M.L."/>
            <person name="Rehman M."/>
            <person name="Walther T.C."/>
            <person name="Olsen J.V."/>
            <person name="Mann M."/>
        </authorList>
    </citation>
    <scope>ACETYLATION [LARGE SCALE ANALYSIS] AT LYS-463</scope>
    <scope>IDENTIFICATION BY MASS SPECTROMETRY [LARGE SCALE ANALYSIS]</scope>
</reference>
<reference key="10">
    <citation type="journal article" date="2011" name="BMC Syst. Biol.">
        <title>Initial characterization of the human central proteome.</title>
        <authorList>
            <person name="Burkard T.R."/>
            <person name="Planyavsky M."/>
            <person name="Kaupe I."/>
            <person name="Breitwieser F.P."/>
            <person name="Buerckstuemmer T."/>
            <person name="Bennett K.L."/>
            <person name="Superti-Furga G."/>
            <person name="Colinge J."/>
        </authorList>
    </citation>
    <scope>IDENTIFICATION BY MASS SPECTROMETRY [LARGE SCALE ANALYSIS]</scope>
</reference>
<reference key="11">
    <citation type="journal article" date="2012" name="Mol. Cell. Proteomics">
        <title>Comparative large-scale characterisation of plant vs. mammal proteins reveals similar and idiosyncratic N-alpha acetylation features.</title>
        <authorList>
            <person name="Bienvenut W.V."/>
            <person name="Sumpton D."/>
            <person name="Martinez A."/>
            <person name="Lilla S."/>
            <person name="Espagne C."/>
            <person name="Meinnel T."/>
            <person name="Giglione C."/>
        </authorList>
    </citation>
    <scope>ACETYLATION [LARGE SCALE ANALYSIS] AT SER-2</scope>
    <scope>CLEAVAGE OF INITIATOR METHIONINE [LARGE SCALE ANALYSIS]</scope>
    <scope>IDENTIFICATION BY MASS SPECTROMETRY [LARGE SCALE ANALYSIS]</scope>
</reference>
<reference key="12">
    <citation type="journal article" date="2012" name="Proc. Natl. Acad. Sci. U.S.A.">
        <title>N-terminal acetylome analyses and functional insights of the N-terminal acetyltransferase NatB.</title>
        <authorList>
            <person name="Van Damme P."/>
            <person name="Lasa M."/>
            <person name="Polevoda B."/>
            <person name="Gazquez C."/>
            <person name="Elosegui-Artola A."/>
            <person name="Kim D.S."/>
            <person name="De Juan-Pardo E."/>
            <person name="Demeyer K."/>
            <person name="Hole K."/>
            <person name="Larrea E."/>
            <person name="Timmerman E."/>
            <person name="Prieto J."/>
            <person name="Arnesen T."/>
            <person name="Sherman F."/>
            <person name="Gevaert K."/>
            <person name="Aldabe R."/>
        </authorList>
    </citation>
    <scope>ACETYLATION [LARGE SCALE ANALYSIS] AT SER-2</scope>
    <scope>CLEAVAGE OF INITIATOR METHIONINE [LARGE SCALE ANALYSIS]</scope>
    <scope>IDENTIFICATION BY MASS SPECTROMETRY [LARGE SCALE ANALYSIS]</scope>
</reference>
<reference key="13">
    <citation type="journal article" date="2013" name="J. Proteome Res.">
        <title>Toward a comprehensive characterization of a human cancer cell phosphoproteome.</title>
        <authorList>
            <person name="Zhou H."/>
            <person name="Di Palma S."/>
            <person name="Preisinger C."/>
            <person name="Peng M."/>
            <person name="Polat A.N."/>
            <person name="Heck A.J."/>
            <person name="Mohammed S."/>
        </authorList>
    </citation>
    <scope>PHOSPHORYLATION [LARGE SCALE ANALYSIS] AT SER-495</scope>
    <scope>IDENTIFICATION BY MASS SPECTROMETRY [LARGE SCALE ANALYSIS]</scope>
    <source>
        <tissue>Cervix carcinoma</tissue>
        <tissue>Erythroleukemia</tissue>
    </source>
</reference>
<reference key="14">
    <citation type="journal article" date="2016" name="Am. J. Hum. Genet.">
        <title>Biallelic TBCD mutations cause early-onset neurodegenerative encephalopathy.</title>
        <authorList>
            <person name="Miyake N."/>
            <person name="Fukai R."/>
            <person name="Ohba C."/>
            <person name="Chihara T."/>
            <person name="Miura M."/>
            <person name="Shimizu H."/>
            <person name="Kakita A."/>
            <person name="Imagawa E."/>
            <person name="Shiina M."/>
            <person name="Ogata K."/>
            <person name="Okuno-Yuguchi J."/>
            <person name="Fueki N."/>
            <person name="Ogiso Y."/>
            <person name="Suzumura H."/>
            <person name="Watabe Y."/>
            <person name="Imataka G."/>
            <person name="Leong H.Y."/>
            <person name="Fattal-Valevski A."/>
            <person name="Kramer U."/>
            <person name="Miyatake S."/>
            <person name="Kato M."/>
            <person name="Okamoto N."/>
            <person name="Sato Y."/>
            <person name="Mitsuhashi S."/>
            <person name="Nishino I."/>
            <person name="Kaneko N."/>
            <person name="Nishiyama A."/>
            <person name="Tamura T."/>
            <person name="Mizuguchi T."/>
            <person name="Nakashima M."/>
            <person name="Tanaka F."/>
            <person name="Saitsu H."/>
            <person name="Matsumoto N."/>
        </authorList>
    </citation>
    <scope>INTERACTION WITH TBCD</scope>
</reference>
<reference key="15">
    <citation type="journal article" date="2016" name="Am. J. Hum. Genet.">
        <title>TBCE mutations cause early-onset progressive encephalopathy with distal spinal muscular atrophy.</title>
        <authorList>
            <person name="Sferra A."/>
            <person name="Baillat G."/>
            <person name="Rizza T."/>
            <person name="Barresi S."/>
            <person name="Flex E."/>
            <person name="Tasca G."/>
            <person name="D'Amico A."/>
            <person name="Bellacchio E."/>
            <person name="Ciolfi A."/>
            <person name="Caputo V."/>
            <person name="Cecchetti S."/>
            <person name="Torella A."/>
            <person name="Zanni G."/>
            <person name="Diodato D."/>
            <person name="Piermarini E."/>
            <person name="Niceta M."/>
            <person name="Coppola A."/>
            <person name="Tedeschi E."/>
            <person name="Martinelli D."/>
            <person name="Dionisi-Vici C."/>
            <person name="Nigro V."/>
            <person name="Dallapiccola B."/>
            <person name="Compagnucci C."/>
            <person name="Tartaglia M."/>
            <person name="Haase G."/>
            <person name="Bertini E."/>
        </authorList>
    </citation>
    <scope>FUNCTION</scope>
    <scope>INVOLVEMENT IN PEAMO</scope>
    <scope>VARIANT PEAMO ASN-155</scope>
    <scope>CHARACTERIZATION OF VARIANT PEAMO ASN-155</scope>
</reference>
<reference key="16">
    <citation type="journal article" date="2002" name="Nat. Genet.">
        <title>Mutation of TBCE causes hypoparathyroidism-retardation-dysmorphism and autosomal recessive Kenny-Caffey syndrome.</title>
        <authorList>
            <person name="Parvari R."/>
            <person name="Hershkovitz E."/>
            <person name="Grossman N."/>
            <person name="Gorodischer R."/>
            <person name="Loeys B."/>
            <person name="Zecic A."/>
            <person name="Mortier G."/>
            <person name="Gregory S."/>
            <person name="Sharony R."/>
            <person name="Kambouris M."/>
            <person name="Sakati N."/>
            <person name="Meyer B.F."/>
            <person name="Al-Aqeel A.I."/>
            <person name="Al-Humaidan A.K."/>
            <person name="Al-Zanhrani F."/>
            <person name="Al-Swaid A."/>
            <person name="Al Othman J."/>
            <person name="Diaz G.A."/>
            <person name="Weiner R."/>
            <person name="Khan K.T.S."/>
            <person name="Gordon R."/>
            <person name="Gelb B.D."/>
        </authorList>
    </citation>
    <scope>VARIANT HRDS 52-SER--GLY-55 DEL</scope>
    <scope>VARIANT KCS1 52-SER--GLY-55 DEL</scope>
</reference>
<organism>
    <name type="scientific">Homo sapiens</name>
    <name type="common">Human</name>
    <dbReference type="NCBI Taxonomy" id="9606"/>
    <lineage>
        <taxon>Eukaryota</taxon>
        <taxon>Metazoa</taxon>
        <taxon>Chordata</taxon>
        <taxon>Craniata</taxon>
        <taxon>Vertebrata</taxon>
        <taxon>Euteleostomi</taxon>
        <taxon>Mammalia</taxon>
        <taxon>Eutheria</taxon>
        <taxon>Euarchontoglires</taxon>
        <taxon>Primates</taxon>
        <taxon>Haplorrhini</taxon>
        <taxon>Catarrhini</taxon>
        <taxon>Hominidae</taxon>
        <taxon>Homo</taxon>
    </lineage>
</organism>
<dbReference type="EMBL" id="U61232">
    <property type="protein sequence ID" value="AAB17538.1"/>
    <property type="molecule type" value="mRNA"/>
</dbReference>
<dbReference type="EMBL" id="BT007086">
    <property type="protein sequence ID" value="AAP35749.1"/>
    <property type="molecule type" value="mRNA"/>
</dbReference>
<dbReference type="EMBL" id="AK292287">
    <property type="protein sequence ID" value="BAF84976.1"/>
    <property type="molecule type" value="mRNA"/>
</dbReference>
<dbReference type="EMBL" id="AK296185">
    <property type="protein sequence ID" value="BAH12277.1"/>
    <property type="molecule type" value="mRNA"/>
</dbReference>
<dbReference type="EMBL" id="AL357556">
    <property type="status" value="NOT_ANNOTATED_CDS"/>
    <property type="molecule type" value="Genomic_DNA"/>
</dbReference>
<dbReference type="EMBL" id="AL672237">
    <property type="status" value="NOT_ANNOTATED_CDS"/>
    <property type="molecule type" value="Genomic_DNA"/>
</dbReference>
<dbReference type="EMBL" id="FO393422">
    <property type="status" value="NOT_ANNOTATED_CDS"/>
    <property type="molecule type" value="Genomic_DNA"/>
</dbReference>
<dbReference type="EMBL" id="BC008654">
    <property type="protein sequence ID" value="AAH08654.1"/>
    <property type="molecule type" value="mRNA"/>
</dbReference>
<dbReference type="CCDS" id="CCDS1605.1">
    <molecule id="Q15813-1"/>
</dbReference>
<dbReference type="CCDS" id="CCDS73052.1">
    <molecule id="Q15813-2"/>
</dbReference>
<dbReference type="RefSeq" id="NP_001072983.1">
    <molecule id="Q15813-1"/>
    <property type="nucleotide sequence ID" value="NM_001079515.3"/>
</dbReference>
<dbReference type="RefSeq" id="NP_001274730.1">
    <molecule id="Q15813-2"/>
    <property type="nucleotide sequence ID" value="NM_001287801.2"/>
</dbReference>
<dbReference type="RefSeq" id="NP_001274731.1">
    <property type="nucleotide sequence ID" value="NM_001287802.1"/>
</dbReference>
<dbReference type="RefSeq" id="NP_003184.1">
    <molecule id="Q15813-1"/>
    <property type="nucleotide sequence ID" value="NM_003193.5"/>
</dbReference>
<dbReference type="PDB" id="4ICU">
    <property type="method" value="X-ray"/>
    <property type="resolution" value="2.40 A"/>
    <property type="chains" value="A/B/C/D=443-527"/>
</dbReference>
<dbReference type="PDB" id="4ICV">
    <property type="method" value="X-ray"/>
    <property type="resolution" value="1.45 A"/>
    <property type="chains" value="A=443-527"/>
</dbReference>
<dbReference type="PDBsum" id="4ICU"/>
<dbReference type="PDBsum" id="4ICV"/>
<dbReference type="EMDB" id="EMD-2447"/>
<dbReference type="SMR" id="Q15813"/>
<dbReference type="BioGRID" id="112768">
    <property type="interactions" value="77"/>
</dbReference>
<dbReference type="CORUM" id="Q15813"/>
<dbReference type="FunCoup" id="Q15813">
    <property type="interactions" value="2169"/>
</dbReference>
<dbReference type="IntAct" id="Q15813">
    <property type="interactions" value="28"/>
</dbReference>
<dbReference type="STRING" id="9606.ENSP00000495202"/>
<dbReference type="GlyGen" id="Q15813">
    <property type="glycosylation" value="2 sites, 1 N-linked glycan (1 site), 1 O-linked glycan (1 site)"/>
</dbReference>
<dbReference type="iPTMnet" id="Q15813"/>
<dbReference type="MetOSite" id="Q15813"/>
<dbReference type="PhosphoSitePlus" id="Q15813"/>
<dbReference type="BioMuta" id="TBCE"/>
<dbReference type="DMDM" id="74762146"/>
<dbReference type="jPOST" id="Q15813"/>
<dbReference type="MassIVE" id="Q15813"/>
<dbReference type="PaxDb" id="9606-ENSP00000439170"/>
<dbReference type="PeptideAtlas" id="Q15813"/>
<dbReference type="ProteomicsDB" id="60772">
    <molecule id="Q15813-1"/>
</dbReference>
<dbReference type="ProteomicsDB" id="6536"/>
<dbReference type="Pumba" id="Q15813"/>
<dbReference type="Antibodypedia" id="79050">
    <property type="antibodies" value="180 antibodies from 26 providers"/>
</dbReference>
<dbReference type="Antibodypedia" id="81226">
    <property type="antibodies" value="3 antibodies from 1 providers"/>
</dbReference>
<dbReference type="DNASU" id="6905"/>
<dbReference type="Ensembl" id="ENST00000406207.5">
    <molecule id="Q15813-1"/>
    <property type="protein sequence ID" value="ENSP00000384571.1"/>
    <property type="gene ID" value="ENSG00000284770.2"/>
</dbReference>
<dbReference type="Ensembl" id="ENST00000543662.4">
    <molecule id="Q15813-2"/>
    <property type="protein sequence ID" value="ENSP00000439170.1"/>
    <property type="gene ID" value="ENSG00000284770.2"/>
</dbReference>
<dbReference type="Ensembl" id="ENST00000642610.2">
    <molecule id="Q15813-1"/>
    <property type="protein sequence ID" value="ENSP00000494796.1"/>
    <property type="gene ID" value="ENSG00000284770.2"/>
</dbReference>
<dbReference type="GeneID" id="6905"/>
<dbReference type="KEGG" id="hsa:6905"/>
<dbReference type="MANE-Select" id="ENST00000642610.2">
    <property type="protein sequence ID" value="ENSP00000494796.1"/>
    <property type="RefSeq nucleotide sequence ID" value="NM_003193.5"/>
    <property type="RefSeq protein sequence ID" value="NP_003184.1"/>
</dbReference>
<dbReference type="UCSC" id="uc001hwz.2">
    <molecule id="Q15813-1"/>
    <property type="organism name" value="human"/>
</dbReference>
<dbReference type="AGR" id="HGNC:11582"/>
<dbReference type="CTD" id="6905"/>
<dbReference type="DisGeNET" id="6905"/>
<dbReference type="GeneCards" id="TBCE"/>
<dbReference type="HGNC" id="HGNC:11582">
    <property type="gene designation" value="TBCE"/>
</dbReference>
<dbReference type="HPA" id="ENSG00000284770">
    <property type="expression patterns" value="Low tissue specificity"/>
</dbReference>
<dbReference type="HPA" id="ENSG00000285053">
    <property type="expression patterns" value="Low tissue specificity"/>
</dbReference>
<dbReference type="MalaCards" id="TBCE"/>
<dbReference type="MIM" id="241410">
    <property type="type" value="phenotype"/>
</dbReference>
<dbReference type="MIM" id="244460">
    <property type="type" value="phenotype"/>
</dbReference>
<dbReference type="MIM" id="604934">
    <property type="type" value="gene"/>
</dbReference>
<dbReference type="MIM" id="617207">
    <property type="type" value="phenotype"/>
</dbReference>
<dbReference type="neXtProt" id="NX_Q15813"/>
<dbReference type="Orphanet" id="93324">
    <property type="disease" value="Autosomal recessive Kenny-Caffey syndrome"/>
</dbReference>
<dbReference type="Orphanet" id="496756">
    <property type="disease" value="Early-onset progressive encephalopathy-spastic ataxia-distal spinal muscular atrophy syndrome"/>
</dbReference>
<dbReference type="Orphanet" id="2323">
    <property type="disease" value="Sanjad-Sakati syndrome"/>
</dbReference>
<dbReference type="PharmGKB" id="PA36346"/>
<dbReference type="VEuPathDB" id="HostDB:ENSG00000284770"/>
<dbReference type="VEuPathDB" id="HostDB:ENSG00000285053"/>
<dbReference type="eggNOG" id="KOG3207">
    <property type="taxonomic scope" value="Eukaryota"/>
</dbReference>
<dbReference type="GeneTree" id="ENSGT00530000063405"/>
<dbReference type="HOGENOM" id="CLU_017716_5_0_1"/>
<dbReference type="InParanoid" id="Q15813"/>
<dbReference type="OMA" id="SEESHMF"/>
<dbReference type="OrthoDB" id="5273213at2759"/>
<dbReference type="PAN-GO" id="Q15813">
    <property type="GO annotations" value="5 GO annotations based on evolutionary models"/>
</dbReference>
<dbReference type="PhylomeDB" id="Q15813"/>
<dbReference type="TreeFam" id="TF313455"/>
<dbReference type="PathwayCommons" id="Q15813"/>
<dbReference type="Reactome" id="R-HSA-389977">
    <property type="pathway name" value="Post-chaperonin tubulin folding pathway"/>
</dbReference>
<dbReference type="SignaLink" id="Q15813"/>
<dbReference type="BioGRID-ORCS" id="6905">
    <property type="hits" value="409 hits in 1146 CRISPR screens"/>
</dbReference>
<dbReference type="ChiTaRS" id="TBCE">
    <property type="organism name" value="human"/>
</dbReference>
<dbReference type="EvolutionaryTrace" id="Q15813"/>
<dbReference type="GeneWiki" id="TBCE"/>
<dbReference type="GenomeRNAi" id="6905"/>
<dbReference type="Pharos" id="Q15813">
    <property type="development level" value="Tbio"/>
</dbReference>
<dbReference type="PRO" id="PR:Q15813"/>
<dbReference type="Proteomes" id="UP000005640">
    <property type="component" value="Chromosome 1"/>
</dbReference>
<dbReference type="RNAct" id="Q15813">
    <property type="molecule type" value="protein"/>
</dbReference>
<dbReference type="Bgee" id="ENSG00000284770">
    <property type="expression patterns" value="Expressed in ventricular zone and 96 other cell types or tissues"/>
</dbReference>
<dbReference type="ExpressionAtlas" id="Q15813">
    <property type="expression patterns" value="baseline and differential"/>
</dbReference>
<dbReference type="GO" id="GO:0005737">
    <property type="term" value="C:cytoplasm"/>
    <property type="evidence" value="ECO:0000318"/>
    <property type="project" value="GO_Central"/>
</dbReference>
<dbReference type="GO" id="GO:0005874">
    <property type="term" value="C:microtubule"/>
    <property type="evidence" value="ECO:0000304"/>
    <property type="project" value="ProtInc"/>
</dbReference>
<dbReference type="GO" id="GO:0043014">
    <property type="term" value="F:alpha-tubulin binding"/>
    <property type="evidence" value="ECO:0000318"/>
    <property type="project" value="GO_Central"/>
</dbReference>
<dbReference type="GO" id="GO:0051087">
    <property type="term" value="F:protein-folding chaperone binding"/>
    <property type="evidence" value="ECO:0000304"/>
    <property type="project" value="ProtInc"/>
</dbReference>
<dbReference type="GO" id="GO:0008344">
    <property type="term" value="P:adult locomotory behavior"/>
    <property type="evidence" value="ECO:0007669"/>
    <property type="project" value="Ensembl"/>
</dbReference>
<dbReference type="GO" id="GO:0048589">
    <property type="term" value="P:developmental growth"/>
    <property type="evidence" value="ECO:0007669"/>
    <property type="project" value="Ensembl"/>
</dbReference>
<dbReference type="GO" id="GO:0000226">
    <property type="term" value="P:microtubule cytoskeleton organization"/>
    <property type="evidence" value="ECO:0000315"/>
    <property type="project" value="UniProtKB"/>
</dbReference>
<dbReference type="GO" id="GO:0007052">
    <property type="term" value="P:mitotic spindle organization"/>
    <property type="evidence" value="ECO:0000315"/>
    <property type="project" value="UniProtKB"/>
</dbReference>
<dbReference type="GO" id="GO:0014889">
    <property type="term" value="P:muscle atrophy"/>
    <property type="evidence" value="ECO:0007669"/>
    <property type="project" value="Ensembl"/>
</dbReference>
<dbReference type="GO" id="GO:0048936">
    <property type="term" value="P:peripheral nervous system neuron axonogenesis"/>
    <property type="evidence" value="ECO:0007669"/>
    <property type="project" value="Ensembl"/>
</dbReference>
<dbReference type="GO" id="GO:0007023">
    <property type="term" value="P:post-chaperonin tubulin folding pathway"/>
    <property type="evidence" value="ECO:0000314"/>
    <property type="project" value="UniProtKB"/>
</dbReference>
<dbReference type="GO" id="GO:0009791">
    <property type="term" value="P:post-embryonic development"/>
    <property type="evidence" value="ECO:0007669"/>
    <property type="project" value="Ensembl"/>
</dbReference>
<dbReference type="GO" id="GO:0006457">
    <property type="term" value="P:protein folding"/>
    <property type="evidence" value="ECO:0000304"/>
    <property type="project" value="UniProtKB"/>
</dbReference>
<dbReference type="GO" id="GO:0007021">
    <property type="term" value="P:tubulin complex assembly"/>
    <property type="evidence" value="ECO:0000318"/>
    <property type="project" value="GO_Central"/>
</dbReference>
<dbReference type="CDD" id="cd17044">
    <property type="entry name" value="Ubl_TBCE"/>
    <property type="match status" value="1"/>
</dbReference>
<dbReference type="FunFam" id="2.30.30.190:FF:000008">
    <property type="entry name" value="Tubulin-specific chaperone E"/>
    <property type="match status" value="1"/>
</dbReference>
<dbReference type="FunFam" id="3.10.20.90:FF:000173">
    <property type="entry name" value="Tubulin-specific chaperone E"/>
    <property type="match status" value="1"/>
</dbReference>
<dbReference type="FunFam" id="3.80.10.10:FF:000268">
    <property type="entry name" value="Tubulin-specific chaperone E"/>
    <property type="match status" value="1"/>
</dbReference>
<dbReference type="FunFam" id="3.80.10.10:FF:000593">
    <property type="entry name" value="Tubulin-specific chaperone E"/>
    <property type="match status" value="1"/>
</dbReference>
<dbReference type="Gene3D" id="2.30.30.190">
    <property type="entry name" value="CAP Gly-rich-like domain"/>
    <property type="match status" value="1"/>
</dbReference>
<dbReference type="Gene3D" id="3.10.20.90">
    <property type="entry name" value="Phosphatidylinositol 3-kinase Catalytic Subunit, Chain A, domain 1"/>
    <property type="match status" value="1"/>
</dbReference>
<dbReference type="Gene3D" id="3.80.10.10">
    <property type="entry name" value="Ribonuclease Inhibitor"/>
    <property type="match status" value="2"/>
</dbReference>
<dbReference type="InterPro" id="IPR036859">
    <property type="entry name" value="CAP-Gly_dom_sf"/>
</dbReference>
<dbReference type="InterPro" id="IPR000938">
    <property type="entry name" value="CAP-Gly_domain"/>
</dbReference>
<dbReference type="InterPro" id="IPR032675">
    <property type="entry name" value="LRR_dom_sf"/>
</dbReference>
<dbReference type="InterPro" id="IPR000626">
    <property type="entry name" value="Ubiquitin-like_dom"/>
</dbReference>
<dbReference type="InterPro" id="IPR029071">
    <property type="entry name" value="Ubiquitin-like_domsf"/>
</dbReference>
<dbReference type="InterPro" id="IPR044079">
    <property type="entry name" value="Ubl_TBCE"/>
</dbReference>
<dbReference type="PANTHER" id="PTHR18849:SF0">
    <property type="entry name" value="CILIA- AND FLAGELLA-ASSOCIATED PROTEIN 410-RELATED"/>
    <property type="match status" value="1"/>
</dbReference>
<dbReference type="PANTHER" id="PTHR18849">
    <property type="entry name" value="LEUCINE RICH REPEAT PROTEIN"/>
    <property type="match status" value="1"/>
</dbReference>
<dbReference type="Pfam" id="PF01302">
    <property type="entry name" value="CAP_GLY"/>
    <property type="match status" value="1"/>
</dbReference>
<dbReference type="Pfam" id="PF14560">
    <property type="entry name" value="Ubiquitin_2"/>
    <property type="match status" value="1"/>
</dbReference>
<dbReference type="SMART" id="SM01052">
    <property type="entry name" value="CAP_GLY"/>
    <property type="match status" value="1"/>
</dbReference>
<dbReference type="SUPFAM" id="SSF74924">
    <property type="entry name" value="Cap-Gly domain"/>
    <property type="match status" value="1"/>
</dbReference>
<dbReference type="SUPFAM" id="SSF52047">
    <property type="entry name" value="RNI-like"/>
    <property type="match status" value="1"/>
</dbReference>
<dbReference type="SUPFAM" id="SSF54236">
    <property type="entry name" value="Ubiquitin-like"/>
    <property type="match status" value="1"/>
</dbReference>
<dbReference type="PROSITE" id="PS00845">
    <property type="entry name" value="CAP_GLY_1"/>
    <property type="match status" value="1"/>
</dbReference>
<dbReference type="PROSITE" id="PS50245">
    <property type="entry name" value="CAP_GLY_2"/>
    <property type="match status" value="1"/>
</dbReference>
<evidence type="ECO:0000250" key="1"/>
<evidence type="ECO:0000250" key="2">
    <source>
        <dbReference type="UniProtKB" id="Q8CIV8"/>
    </source>
</evidence>
<evidence type="ECO:0000255" key="3">
    <source>
        <dbReference type="PROSITE-ProRule" id="PRU00045"/>
    </source>
</evidence>
<evidence type="ECO:0000269" key="4">
    <source>
    </source>
</evidence>
<evidence type="ECO:0000269" key="5">
    <source>
    </source>
</evidence>
<evidence type="ECO:0000269" key="6">
    <source>
    </source>
</evidence>
<evidence type="ECO:0000269" key="7">
    <source>
    </source>
</evidence>
<evidence type="ECO:0000303" key="8">
    <source>
    </source>
</evidence>
<evidence type="ECO:0000305" key="9"/>
<evidence type="ECO:0007744" key="10">
    <source>
    </source>
</evidence>
<evidence type="ECO:0007744" key="11">
    <source>
    </source>
</evidence>
<evidence type="ECO:0007744" key="12">
    <source>
    </source>
</evidence>
<evidence type="ECO:0007744" key="13">
    <source>
    </source>
</evidence>
<evidence type="ECO:0007744" key="14">
    <source>
    </source>
</evidence>
<evidence type="ECO:0007744" key="15">
    <source>
    </source>
</evidence>
<evidence type="ECO:0007829" key="16">
    <source>
        <dbReference type="PDB" id="4ICU"/>
    </source>
</evidence>
<evidence type="ECO:0007829" key="17">
    <source>
        <dbReference type="PDB" id="4ICV"/>
    </source>
</evidence>
<gene>
    <name type="primary">TBCE</name>
</gene>
<name>TBCE_HUMAN</name>
<proteinExistence type="evidence at protein level"/>
<protein>
    <recommendedName>
        <fullName>Tubulin-specific chaperone E</fullName>
    </recommendedName>
    <alternativeName>
        <fullName>Tubulin-folding cofactor E</fullName>
    </alternativeName>
</protein>
<keyword id="KW-0002">3D-structure</keyword>
<keyword id="KW-0007">Acetylation</keyword>
<keyword id="KW-0025">Alternative splicing</keyword>
<keyword id="KW-0143">Chaperone</keyword>
<keyword id="KW-0963">Cytoplasm</keyword>
<keyword id="KW-0206">Cytoskeleton</keyword>
<keyword id="KW-0225">Disease variant</keyword>
<keyword id="KW-0242">Dwarfism</keyword>
<keyword id="KW-0991">Intellectual disability</keyword>
<keyword id="KW-0433">Leucine-rich repeat</keyword>
<keyword id="KW-0523">Neurodegeneration</keyword>
<keyword id="KW-0597">Phosphoprotein</keyword>
<keyword id="KW-1267">Proteomics identification</keyword>
<keyword id="KW-1185">Reference proteome</keyword>
<keyword id="KW-0677">Repeat</keyword>